<proteinExistence type="inferred from homology"/>
<name>CLPX_GEOSW</name>
<dbReference type="EMBL" id="CP001638">
    <property type="protein sequence ID" value="ACS25282.1"/>
    <property type="molecule type" value="Genomic_DNA"/>
</dbReference>
<dbReference type="SMR" id="C5D5L4"/>
<dbReference type="STRING" id="471223.GWCH70_2587"/>
<dbReference type="KEGG" id="gwc:GWCH70_2587"/>
<dbReference type="eggNOG" id="COG1219">
    <property type="taxonomic scope" value="Bacteria"/>
</dbReference>
<dbReference type="HOGENOM" id="CLU_014218_8_2_9"/>
<dbReference type="OrthoDB" id="9804062at2"/>
<dbReference type="GO" id="GO:0009376">
    <property type="term" value="C:HslUV protease complex"/>
    <property type="evidence" value="ECO:0007669"/>
    <property type="project" value="TreeGrafter"/>
</dbReference>
<dbReference type="GO" id="GO:0005524">
    <property type="term" value="F:ATP binding"/>
    <property type="evidence" value="ECO:0007669"/>
    <property type="project" value="UniProtKB-UniRule"/>
</dbReference>
<dbReference type="GO" id="GO:0016887">
    <property type="term" value="F:ATP hydrolysis activity"/>
    <property type="evidence" value="ECO:0007669"/>
    <property type="project" value="InterPro"/>
</dbReference>
<dbReference type="GO" id="GO:0140662">
    <property type="term" value="F:ATP-dependent protein folding chaperone"/>
    <property type="evidence" value="ECO:0007669"/>
    <property type="project" value="InterPro"/>
</dbReference>
<dbReference type="GO" id="GO:0046983">
    <property type="term" value="F:protein dimerization activity"/>
    <property type="evidence" value="ECO:0007669"/>
    <property type="project" value="InterPro"/>
</dbReference>
<dbReference type="GO" id="GO:0051082">
    <property type="term" value="F:unfolded protein binding"/>
    <property type="evidence" value="ECO:0007669"/>
    <property type="project" value="UniProtKB-UniRule"/>
</dbReference>
<dbReference type="GO" id="GO:0008270">
    <property type="term" value="F:zinc ion binding"/>
    <property type="evidence" value="ECO:0007669"/>
    <property type="project" value="InterPro"/>
</dbReference>
<dbReference type="GO" id="GO:0051301">
    <property type="term" value="P:cell division"/>
    <property type="evidence" value="ECO:0007669"/>
    <property type="project" value="TreeGrafter"/>
</dbReference>
<dbReference type="GO" id="GO:0051603">
    <property type="term" value="P:proteolysis involved in protein catabolic process"/>
    <property type="evidence" value="ECO:0007669"/>
    <property type="project" value="TreeGrafter"/>
</dbReference>
<dbReference type="CDD" id="cd19497">
    <property type="entry name" value="RecA-like_ClpX"/>
    <property type="match status" value="1"/>
</dbReference>
<dbReference type="FunFam" id="1.10.8.60:FF:000002">
    <property type="entry name" value="ATP-dependent Clp protease ATP-binding subunit ClpX"/>
    <property type="match status" value="1"/>
</dbReference>
<dbReference type="FunFam" id="3.40.50.300:FF:000005">
    <property type="entry name" value="ATP-dependent Clp protease ATP-binding subunit ClpX"/>
    <property type="match status" value="1"/>
</dbReference>
<dbReference type="Gene3D" id="1.10.8.60">
    <property type="match status" value="1"/>
</dbReference>
<dbReference type="Gene3D" id="6.20.220.10">
    <property type="entry name" value="ClpX chaperone, C4-type zinc finger domain"/>
    <property type="match status" value="1"/>
</dbReference>
<dbReference type="Gene3D" id="3.40.50.300">
    <property type="entry name" value="P-loop containing nucleotide triphosphate hydrolases"/>
    <property type="match status" value="1"/>
</dbReference>
<dbReference type="HAMAP" id="MF_00175">
    <property type="entry name" value="ClpX"/>
    <property type="match status" value="1"/>
</dbReference>
<dbReference type="InterPro" id="IPR003593">
    <property type="entry name" value="AAA+_ATPase"/>
</dbReference>
<dbReference type="InterPro" id="IPR050052">
    <property type="entry name" value="ATP-dep_Clp_protease_ClpX"/>
</dbReference>
<dbReference type="InterPro" id="IPR003959">
    <property type="entry name" value="ATPase_AAA_core"/>
</dbReference>
<dbReference type="InterPro" id="IPR019489">
    <property type="entry name" value="Clp_ATPase_C"/>
</dbReference>
<dbReference type="InterPro" id="IPR004487">
    <property type="entry name" value="Clp_protease_ATP-bd_su_ClpX"/>
</dbReference>
<dbReference type="InterPro" id="IPR046425">
    <property type="entry name" value="ClpX_bact"/>
</dbReference>
<dbReference type="InterPro" id="IPR027417">
    <property type="entry name" value="P-loop_NTPase"/>
</dbReference>
<dbReference type="InterPro" id="IPR010603">
    <property type="entry name" value="Znf_CppX_C4"/>
</dbReference>
<dbReference type="InterPro" id="IPR038366">
    <property type="entry name" value="Znf_CppX_C4_sf"/>
</dbReference>
<dbReference type="NCBIfam" id="TIGR00382">
    <property type="entry name" value="clpX"/>
    <property type="match status" value="1"/>
</dbReference>
<dbReference type="NCBIfam" id="NF003745">
    <property type="entry name" value="PRK05342.1"/>
    <property type="match status" value="1"/>
</dbReference>
<dbReference type="PANTHER" id="PTHR48102:SF7">
    <property type="entry name" value="ATP-DEPENDENT CLP PROTEASE ATP-BINDING SUBUNIT CLPX-LIKE, MITOCHONDRIAL"/>
    <property type="match status" value="1"/>
</dbReference>
<dbReference type="PANTHER" id="PTHR48102">
    <property type="entry name" value="ATP-DEPENDENT CLP PROTEASE ATP-BINDING SUBUNIT CLPX-LIKE, MITOCHONDRIAL-RELATED"/>
    <property type="match status" value="1"/>
</dbReference>
<dbReference type="Pfam" id="PF07724">
    <property type="entry name" value="AAA_2"/>
    <property type="match status" value="1"/>
</dbReference>
<dbReference type="Pfam" id="PF10431">
    <property type="entry name" value="ClpB_D2-small"/>
    <property type="match status" value="1"/>
</dbReference>
<dbReference type="Pfam" id="PF06689">
    <property type="entry name" value="zf-C4_ClpX"/>
    <property type="match status" value="1"/>
</dbReference>
<dbReference type="SMART" id="SM00382">
    <property type="entry name" value="AAA"/>
    <property type="match status" value="1"/>
</dbReference>
<dbReference type="SMART" id="SM01086">
    <property type="entry name" value="ClpB_D2-small"/>
    <property type="match status" value="1"/>
</dbReference>
<dbReference type="SMART" id="SM00994">
    <property type="entry name" value="zf-C4_ClpX"/>
    <property type="match status" value="1"/>
</dbReference>
<dbReference type="SUPFAM" id="SSF57716">
    <property type="entry name" value="Glucocorticoid receptor-like (DNA-binding domain)"/>
    <property type="match status" value="1"/>
</dbReference>
<dbReference type="SUPFAM" id="SSF52540">
    <property type="entry name" value="P-loop containing nucleoside triphosphate hydrolases"/>
    <property type="match status" value="1"/>
</dbReference>
<dbReference type="PROSITE" id="PS51902">
    <property type="entry name" value="CLPX_ZB"/>
    <property type="match status" value="1"/>
</dbReference>
<accession>C5D5L4</accession>
<comment type="function">
    <text evidence="1">ATP-dependent specificity component of the Clp protease. It directs the protease to specific substrates. Can perform chaperone functions in the absence of ClpP.</text>
</comment>
<comment type="subunit">
    <text evidence="1">Component of the ClpX-ClpP complex. Forms a hexameric ring that, in the presence of ATP, binds to fourteen ClpP subunits assembled into a disk-like structure with a central cavity, resembling the structure of eukaryotic proteasomes.</text>
</comment>
<comment type="similarity">
    <text evidence="1">Belongs to the ClpX chaperone family.</text>
</comment>
<reference key="1">
    <citation type="submission" date="2009-06" db="EMBL/GenBank/DDBJ databases">
        <title>Complete sequence of chromosome of Geopacillus sp. WCH70.</title>
        <authorList>
            <consortium name="US DOE Joint Genome Institute"/>
            <person name="Lucas S."/>
            <person name="Copeland A."/>
            <person name="Lapidus A."/>
            <person name="Glavina del Rio T."/>
            <person name="Dalin E."/>
            <person name="Tice H."/>
            <person name="Bruce D."/>
            <person name="Goodwin L."/>
            <person name="Pitluck S."/>
            <person name="Chertkov O."/>
            <person name="Brettin T."/>
            <person name="Detter J.C."/>
            <person name="Han C."/>
            <person name="Larimer F."/>
            <person name="Land M."/>
            <person name="Hauser L."/>
            <person name="Kyrpides N."/>
            <person name="Mikhailova N."/>
            <person name="Brumm P."/>
            <person name="Mead D.A."/>
            <person name="Richardson P."/>
        </authorList>
    </citation>
    <scope>NUCLEOTIDE SEQUENCE [LARGE SCALE GENOMIC DNA]</scope>
    <source>
        <strain>WCH70</strain>
    </source>
</reference>
<keyword id="KW-0067">ATP-binding</keyword>
<keyword id="KW-0143">Chaperone</keyword>
<keyword id="KW-0479">Metal-binding</keyword>
<keyword id="KW-0547">Nucleotide-binding</keyword>
<keyword id="KW-0862">Zinc</keyword>
<gene>
    <name evidence="1" type="primary">clpX</name>
    <name type="ordered locus">GWCH70_2587</name>
</gene>
<protein>
    <recommendedName>
        <fullName evidence="1">ATP-dependent Clp protease ATP-binding subunit ClpX</fullName>
    </recommendedName>
</protein>
<evidence type="ECO:0000255" key="1">
    <source>
        <dbReference type="HAMAP-Rule" id="MF_00175"/>
    </source>
</evidence>
<evidence type="ECO:0000255" key="2">
    <source>
        <dbReference type="PROSITE-ProRule" id="PRU01250"/>
    </source>
</evidence>
<sequence length="421" mass="46889">MFKFNDEKGQLKCSFCGKTQDQVRKLVAGPGVYICDECIELCTEIVEEELGNEEEFEFKDIPKPKEIREILDEYVIGQDEAKKSLAVAVYNHYKRINSGSKIDDVELSKSNILMIGPTGSGKTLLAQTLARILNVPFAIADATSLTEAGYVGEDVENILLKLIQAADYDVERAEKGIIYIDEIDKIARKSENPSITRDVSGEGVQQALLKILEGTIASVPPQGGRKHPHQEFIQIDTTNILFICGGAFDGLEPIIKRRLGKKVIGFGADIQQSDVDEKNLLSKVLPEDLLKFGLIPEFVGRLPVITTLEPLDEQALVDILTKPKNAIVKQYQKMLELDGVELEFEEEALREIAKKAIERKTGARGLRSIIEGIMLDVMFELPSREDVQKCIITVETVRGNKPPKLIRHDGTVIEQERKTSA</sequence>
<organism>
    <name type="scientific">Geobacillus sp. (strain WCH70)</name>
    <dbReference type="NCBI Taxonomy" id="471223"/>
    <lineage>
        <taxon>Bacteria</taxon>
        <taxon>Bacillati</taxon>
        <taxon>Bacillota</taxon>
        <taxon>Bacilli</taxon>
        <taxon>Bacillales</taxon>
        <taxon>Anoxybacillaceae</taxon>
        <taxon>Geobacillus</taxon>
    </lineage>
</organism>
<feature type="chain" id="PRO_1000203735" description="ATP-dependent Clp protease ATP-binding subunit ClpX">
    <location>
        <begin position="1"/>
        <end position="421"/>
    </location>
</feature>
<feature type="domain" description="ClpX-type ZB" evidence="2">
    <location>
        <begin position="1"/>
        <end position="54"/>
    </location>
</feature>
<feature type="binding site" evidence="2">
    <location>
        <position position="13"/>
    </location>
    <ligand>
        <name>Zn(2+)</name>
        <dbReference type="ChEBI" id="CHEBI:29105"/>
    </ligand>
</feature>
<feature type="binding site" evidence="2">
    <location>
        <position position="16"/>
    </location>
    <ligand>
        <name>Zn(2+)</name>
        <dbReference type="ChEBI" id="CHEBI:29105"/>
    </ligand>
</feature>
<feature type="binding site" evidence="2">
    <location>
        <position position="35"/>
    </location>
    <ligand>
        <name>Zn(2+)</name>
        <dbReference type="ChEBI" id="CHEBI:29105"/>
    </ligand>
</feature>
<feature type="binding site" evidence="2">
    <location>
        <position position="38"/>
    </location>
    <ligand>
        <name>Zn(2+)</name>
        <dbReference type="ChEBI" id="CHEBI:29105"/>
    </ligand>
</feature>
<feature type="binding site" evidence="1">
    <location>
        <begin position="117"/>
        <end position="124"/>
    </location>
    <ligand>
        <name>ATP</name>
        <dbReference type="ChEBI" id="CHEBI:30616"/>
    </ligand>
</feature>